<dbReference type="EMBL" id="X52772">
    <property type="protein sequence ID" value="CAA36981.1"/>
    <property type="molecule type" value="mRNA"/>
</dbReference>
<dbReference type="EMBL" id="AJ617615">
    <property type="protein sequence ID" value="CAE85101.1"/>
    <property type="molecule type" value="mRNA"/>
</dbReference>
<dbReference type="EMBL" id="DQ181550">
    <property type="protein sequence ID" value="ABA00482.1"/>
    <property type="molecule type" value="mRNA"/>
</dbReference>
<dbReference type="PIR" id="S09595">
    <property type="entry name" value="S09595"/>
</dbReference>
<dbReference type="RefSeq" id="NP_001028852.2">
    <property type="nucleotide sequence ID" value="NM_001033680.2"/>
</dbReference>
<dbReference type="RefSeq" id="XP_017450168.1">
    <property type="nucleotide sequence ID" value="XM_017594679.3"/>
</dbReference>
<dbReference type="RefSeq" id="XP_038934425.1">
    <property type="nucleotide sequence ID" value="XM_039078497.2"/>
</dbReference>
<dbReference type="PDB" id="1BYN">
    <property type="method" value="NMR"/>
    <property type="chains" value="A=140-267"/>
</dbReference>
<dbReference type="PDB" id="1K5W">
    <property type="method" value="NMR"/>
    <property type="chains" value="A=270-421"/>
</dbReference>
<dbReference type="PDB" id="1RSY">
    <property type="method" value="X-ray"/>
    <property type="resolution" value="1.90 A"/>
    <property type="chains" value="A=132-266"/>
</dbReference>
<dbReference type="PDB" id="1TJM">
    <property type="method" value="X-ray"/>
    <property type="resolution" value="1.18 A"/>
    <property type="chains" value="A=271-421"/>
</dbReference>
<dbReference type="PDB" id="1TJX">
    <property type="method" value="X-ray"/>
    <property type="resolution" value="1.04 A"/>
    <property type="chains" value="A=271-421"/>
</dbReference>
<dbReference type="PDB" id="1UOV">
    <property type="method" value="X-ray"/>
    <property type="resolution" value="1.65 A"/>
    <property type="chains" value="A=271-421"/>
</dbReference>
<dbReference type="PDB" id="1UOW">
    <property type="method" value="X-ray"/>
    <property type="resolution" value="1.04 A"/>
    <property type="chains" value="A=271-421"/>
</dbReference>
<dbReference type="PDB" id="2YOA">
    <property type="method" value="X-ray"/>
    <property type="resolution" value="1.50 A"/>
    <property type="chains" value="A/B=271-421"/>
</dbReference>
<dbReference type="PDB" id="4WEE">
    <property type="method" value="X-ray"/>
    <property type="resolution" value="0.89 A"/>
    <property type="chains" value="A=140-266"/>
</dbReference>
<dbReference type="PDB" id="5CCG">
    <property type="method" value="X-ray"/>
    <property type="resolution" value="3.50 A"/>
    <property type="chains" value="E/F/K=141-421"/>
</dbReference>
<dbReference type="PDB" id="5CCH">
    <property type="method" value="X-ray"/>
    <property type="resolution" value="3.60 A"/>
    <property type="chains" value="E/F=141-421"/>
</dbReference>
<dbReference type="PDB" id="5CCI">
    <property type="method" value="X-ray"/>
    <property type="resolution" value="4.10 A"/>
    <property type="chains" value="E/F=141-421"/>
</dbReference>
<dbReference type="PDB" id="5CCJ">
    <property type="method" value="X-ray"/>
    <property type="resolution" value="1.65 A"/>
    <property type="chains" value="A/B/C/D=271-421"/>
</dbReference>
<dbReference type="PDB" id="5KJ7">
    <property type="method" value="X-ray"/>
    <property type="resolution" value="3.50 A"/>
    <property type="chains" value="E/F/K=141-419"/>
</dbReference>
<dbReference type="PDB" id="5KJ8">
    <property type="method" value="X-ray"/>
    <property type="resolution" value="4.10 A"/>
    <property type="chains" value="E/F/K=141-419"/>
</dbReference>
<dbReference type="PDB" id="5W5C">
    <property type="method" value="X-ray"/>
    <property type="resolution" value="1.85 A"/>
    <property type="chains" value="F=140-421"/>
</dbReference>
<dbReference type="PDB" id="5W5D">
    <property type="method" value="X-ray"/>
    <property type="resolution" value="2.50 A"/>
    <property type="chains" value="F=270-421"/>
</dbReference>
<dbReference type="PDB" id="6CXW">
    <property type="method" value="X-ray"/>
    <property type="resolution" value="1.83 A"/>
    <property type="chains" value="A=140-182, A=201-265"/>
</dbReference>
<dbReference type="PDB" id="6MTI">
    <property type="method" value="EM"/>
    <property type="resolution" value="10.40 A"/>
    <property type="chains" value="1/6=141-267, 2/3/4/5=141-421"/>
</dbReference>
<dbReference type="PDB" id="8C5H">
    <property type="method" value="X-ray"/>
    <property type="resolution" value="1.68 A"/>
    <property type="chains" value="S=142-265"/>
</dbReference>
<dbReference type="PDBsum" id="1BYN"/>
<dbReference type="PDBsum" id="1K5W"/>
<dbReference type="PDBsum" id="1RSY"/>
<dbReference type="PDBsum" id="1TJM"/>
<dbReference type="PDBsum" id="1TJX"/>
<dbReference type="PDBsum" id="1UOV"/>
<dbReference type="PDBsum" id="1UOW"/>
<dbReference type="PDBsum" id="2YOA"/>
<dbReference type="PDBsum" id="4WEE"/>
<dbReference type="PDBsum" id="5CCG"/>
<dbReference type="PDBsum" id="5CCH"/>
<dbReference type="PDBsum" id="5CCI"/>
<dbReference type="PDBsum" id="5CCJ"/>
<dbReference type="PDBsum" id="5KJ7"/>
<dbReference type="PDBsum" id="5KJ8"/>
<dbReference type="PDBsum" id="5W5C"/>
<dbReference type="PDBsum" id="5W5D"/>
<dbReference type="PDBsum" id="6CXW"/>
<dbReference type="PDBsum" id="6MTI"/>
<dbReference type="PDBsum" id="8C5H"/>
<dbReference type="SMR" id="P21707"/>
<dbReference type="BioGRID" id="247745">
    <property type="interactions" value="7"/>
</dbReference>
<dbReference type="CORUM" id="P21707"/>
<dbReference type="DIP" id="DIP-29064N"/>
<dbReference type="FunCoup" id="P21707">
    <property type="interactions" value="2288"/>
</dbReference>
<dbReference type="IntAct" id="P21707">
    <property type="interactions" value="26"/>
</dbReference>
<dbReference type="MINT" id="P21707"/>
<dbReference type="STRING" id="10116.ENSRNOP00000069194"/>
<dbReference type="GlyCosmos" id="P21707">
    <property type="glycosylation" value="1 site, No reported glycans"/>
</dbReference>
<dbReference type="GlyGen" id="P21707">
    <property type="glycosylation" value="2 sites, 1 O-linked glycan (1 site)"/>
</dbReference>
<dbReference type="iPTMnet" id="P21707"/>
<dbReference type="PhosphoSitePlus" id="P21707"/>
<dbReference type="SwissPalm" id="P21707"/>
<dbReference type="jPOST" id="P21707"/>
<dbReference type="PaxDb" id="10116-ENSRNOP00000049624"/>
<dbReference type="Ensembl" id="ENSRNOT00000048880.3">
    <property type="protein sequence ID" value="ENSRNOP00000049624.2"/>
    <property type="gene ID" value="ENSRNOG00000006426.7"/>
</dbReference>
<dbReference type="GeneID" id="25716"/>
<dbReference type="KEGG" id="rno:25716"/>
<dbReference type="UCSC" id="RGD:3803">
    <property type="organism name" value="rat"/>
</dbReference>
<dbReference type="AGR" id="RGD:3803"/>
<dbReference type="CTD" id="6857"/>
<dbReference type="RGD" id="3803">
    <property type="gene designation" value="Syt1"/>
</dbReference>
<dbReference type="eggNOG" id="KOG1028">
    <property type="taxonomic scope" value="Eukaryota"/>
</dbReference>
<dbReference type="GeneTree" id="ENSGT00940000155394"/>
<dbReference type="InParanoid" id="P21707"/>
<dbReference type="OMA" id="DVGGLSX"/>
<dbReference type="OrthoDB" id="67700at2759"/>
<dbReference type="PhylomeDB" id="P21707"/>
<dbReference type="TreeFam" id="TF315600"/>
<dbReference type="Reactome" id="R-RNO-181429">
    <property type="pathway name" value="Serotonin Neurotransmitter Release Cycle"/>
</dbReference>
<dbReference type="Reactome" id="R-RNO-181430">
    <property type="pathway name" value="Norepinephrine Neurotransmitter Release Cycle"/>
</dbReference>
<dbReference type="Reactome" id="R-RNO-210500">
    <property type="pathway name" value="Glutamate Neurotransmitter Release Cycle"/>
</dbReference>
<dbReference type="Reactome" id="R-RNO-212676">
    <property type="pathway name" value="Dopamine Neurotransmitter Release Cycle"/>
</dbReference>
<dbReference type="Reactome" id="R-RNO-264642">
    <property type="pathway name" value="Acetylcholine Neurotransmitter Release Cycle"/>
</dbReference>
<dbReference type="Reactome" id="R-RNO-8856825">
    <property type="pathway name" value="Cargo recognition for clathrin-mediated endocytosis"/>
</dbReference>
<dbReference type="Reactome" id="R-RNO-8856828">
    <property type="pathway name" value="Clathrin-mediated endocytosis"/>
</dbReference>
<dbReference type="Reactome" id="R-RNO-888590">
    <property type="pathway name" value="GABA synthesis, release, reuptake and degradation"/>
</dbReference>
<dbReference type="EvolutionaryTrace" id="P21707"/>
<dbReference type="PRO" id="PR:P21707"/>
<dbReference type="Proteomes" id="UP000002494">
    <property type="component" value="Chromosome 7"/>
</dbReference>
<dbReference type="Bgee" id="ENSRNOG00000006426">
    <property type="expression patterns" value="Expressed in frontal cortex and 15 other cell types or tissues"/>
</dbReference>
<dbReference type="GO" id="GO:0030424">
    <property type="term" value="C:axon"/>
    <property type="evidence" value="ECO:0000266"/>
    <property type="project" value="RGD"/>
</dbReference>
<dbReference type="GO" id="GO:0042584">
    <property type="term" value="C:chromaffin granule membrane"/>
    <property type="evidence" value="ECO:0007669"/>
    <property type="project" value="UniProtKB-SubCell"/>
</dbReference>
<dbReference type="GO" id="GO:0005737">
    <property type="term" value="C:cytoplasm"/>
    <property type="evidence" value="ECO:0000314"/>
    <property type="project" value="MGI"/>
</dbReference>
<dbReference type="GO" id="GO:0031045">
    <property type="term" value="C:dense core granule"/>
    <property type="evidence" value="ECO:0000314"/>
    <property type="project" value="MGI"/>
</dbReference>
<dbReference type="GO" id="GO:0060076">
    <property type="term" value="C:excitatory synapse"/>
    <property type="evidence" value="ECO:0000314"/>
    <property type="project" value="BHF-UCL"/>
</dbReference>
<dbReference type="GO" id="GO:0070382">
    <property type="term" value="C:exocytic vesicle"/>
    <property type="evidence" value="ECO:0000318"/>
    <property type="project" value="GO_Central"/>
</dbReference>
<dbReference type="GO" id="GO:0098978">
    <property type="term" value="C:glutamatergic synapse"/>
    <property type="evidence" value="ECO:0000266"/>
    <property type="project" value="RGD"/>
</dbReference>
<dbReference type="GO" id="GO:0005794">
    <property type="term" value="C:Golgi apparatus"/>
    <property type="evidence" value="ECO:0000266"/>
    <property type="project" value="RGD"/>
</dbReference>
<dbReference type="GO" id="GO:0098686">
    <property type="term" value="C:hippocampal mossy fiber to CA3 synapse"/>
    <property type="evidence" value="ECO:0000314"/>
    <property type="project" value="SynGO"/>
</dbReference>
<dbReference type="GO" id="GO:0043005">
    <property type="term" value="C:neuron projection"/>
    <property type="evidence" value="ECO:0000266"/>
    <property type="project" value="RGD"/>
</dbReference>
<dbReference type="GO" id="GO:0044306">
    <property type="term" value="C:neuron projection terminus"/>
    <property type="evidence" value="ECO:0000314"/>
    <property type="project" value="ParkinsonsUK-UCL"/>
</dbReference>
<dbReference type="GO" id="GO:0005886">
    <property type="term" value="C:plasma membrane"/>
    <property type="evidence" value="ECO:0000314"/>
    <property type="project" value="BHF-UCL"/>
</dbReference>
<dbReference type="GO" id="GO:0099524">
    <property type="term" value="C:postsynaptic cytosol"/>
    <property type="evidence" value="ECO:0000314"/>
    <property type="project" value="SynGO"/>
</dbReference>
<dbReference type="GO" id="GO:0014069">
    <property type="term" value="C:postsynaptic density"/>
    <property type="evidence" value="ECO:0000314"/>
    <property type="project" value="SynGO"/>
</dbReference>
<dbReference type="GO" id="GO:0045211">
    <property type="term" value="C:postsynaptic membrane"/>
    <property type="evidence" value="ECO:0000314"/>
    <property type="project" value="SynGO"/>
</dbReference>
<dbReference type="GO" id="GO:0048786">
    <property type="term" value="C:presynaptic active zone"/>
    <property type="evidence" value="ECO:0000314"/>
    <property type="project" value="SynGO"/>
</dbReference>
<dbReference type="GO" id="GO:0099523">
    <property type="term" value="C:presynaptic cytosol"/>
    <property type="evidence" value="ECO:0000314"/>
    <property type="project" value="SynGO"/>
</dbReference>
<dbReference type="GO" id="GO:0042734">
    <property type="term" value="C:presynaptic membrane"/>
    <property type="evidence" value="ECO:0000266"/>
    <property type="project" value="RGD"/>
</dbReference>
<dbReference type="GO" id="GO:0030141">
    <property type="term" value="C:secretory granule"/>
    <property type="evidence" value="ECO:0000314"/>
    <property type="project" value="RGD"/>
</dbReference>
<dbReference type="GO" id="GO:0008021">
    <property type="term" value="C:synaptic vesicle"/>
    <property type="evidence" value="ECO:0000314"/>
    <property type="project" value="BHF-UCL"/>
</dbReference>
<dbReference type="GO" id="GO:0030672">
    <property type="term" value="C:synaptic vesicle membrane"/>
    <property type="evidence" value="ECO:0000314"/>
    <property type="project" value="CAFA"/>
</dbReference>
<dbReference type="GO" id="GO:0043195">
    <property type="term" value="C:terminal bouton"/>
    <property type="evidence" value="ECO:0007005"/>
    <property type="project" value="ParkinsonsUK-UCL"/>
</dbReference>
<dbReference type="GO" id="GO:0005509">
    <property type="term" value="F:calcium ion binding"/>
    <property type="evidence" value="ECO:0000314"/>
    <property type="project" value="RGD"/>
</dbReference>
<dbReference type="GO" id="GO:0061891">
    <property type="term" value="F:calcium ion sensor activity"/>
    <property type="evidence" value="ECO:0000269"/>
    <property type="project" value="DisProt"/>
</dbReference>
<dbReference type="GO" id="GO:0005544">
    <property type="term" value="F:calcium-dependent phospholipid binding"/>
    <property type="evidence" value="ECO:0000314"/>
    <property type="project" value="BHF-UCL"/>
</dbReference>
<dbReference type="GO" id="GO:0048306">
    <property type="term" value="F:calcium-dependent protein binding"/>
    <property type="evidence" value="ECO:0000314"/>
    <property type="project" value="ParkinsonsUK-UCL"/>
</dbReference>
<dbReference type="GO" id="GO:0005516">
    <property type="term" value="F:calmodulin binding"/>
    <property type="evidence" value="ECO:0000314"/>
    <property type="project" value="RGD"/>
</dbReference>
<dbReference type="GO" id="GO:0030276">
    <property type="term" value="F:clathrin binding"/>
    <property type="evidence" value="ECO:0000314"/>
    <property type="project" value="BHF-UCL"/>
</dbReference>
<dbReference type="GO" id="GO:0042802">
    <property type="term" value="F:identical protein binding"/>
    <property type="evidence" value="ECO:0000353"/>
    <property type="project" value="IntAct"/>
</dbReference>
<dbReference type="GO" id="GO:0008289">
    <property type="term" value="F:lipid binding"/>
    <property type="evidence" value="ECO:0000266"/>
    <property type="project" value="RGD"/>
</dbReference>
<dbReference type="GO" id="GO:0050750">
    <property type="term" value="F:low-density lipoprotein particle receptor binding"/>
    <property type="evidence" value="ECO:0000266"/>
    <property type="project" value="RGD"/>
</dbReference>
<dbReference type="GO" id="GO:0140693">
    <property type="term" value="F:molecular condensate scaffold activity"/>
    <property type="evidence" value="ECO:0000314"/>
    <property type="project" value="DisProt"/>
</dbReference>
<dbReference type="GO" id="GO:0005546">
    <property type="term" value="F:phosphatidylinositol-4,5-bisphosphate binding"/>
    <property type="evidence" value="ECO:0000314"/>
    <property type="project" value="ParkinsonsUK-UCL"/>
</dbReference>
<dbReference type="GO" id="GO:0001786">
    <property type="term" value="F:phosphatidylserine binding"/>
    <property type="evidence" value="ECO:0000314"/>
    <property type="project" value="ParkinsonsUK-UCL"/>
</dbReference>
<dbReference type="GO" id="GO:0005543">
    <property type="term" value="F:phospholipid binding"/>
    <property type="evidence" value="ECO:0000314"/>
    <property type="project" value="ParkinsonsUK-UCL"/>
</dbReference>
<dbReference type="GO" id="GO:0046982">
    <property type="term" value="F:protein heterodimerization activity"/>
    <property type="evidence" value="ECO:0000353"/>
    <property type="project" value="ParkinsonsUK-UCL"/>
</dbReference>
<dbReference type="GO" id="GO:0000149">
    <property type="term" value="F:SNARE binding"/>
    <property type="evidence" value="ECO:0000314"/>
    <property type="project" value="ParkinsonsUK-UCL"/>
</dbReference>
<dbReference type="GO" id="GO:0019905">
    <property type="term" value="F:syntaxin binding"/>
    <property type="evidence" value="ECO:0000314"/>
    <property type="project" value="BHF-UCL"/>
</dbReference>
<dbReference type="GO" id="GO:0017075">
    <property type="term" value="F:syntaxin-1 binding"/>
    <property type="evidence" value="ECO:0000314"/>
    <property type="project" value="ParkinsonsUK-UCL"/>
</dbReference>
<dbReference type="GO" id="GO:0030348">
    <property type="term" value="F:syntaxin-3 binding"/>
    <property type="evidence" value="ECO:0000353"/>
    <property type="project" value="ParkinsonsUK-UCL"/>
</dbReference>
<dbReference type="GO" id="GO:0048791">
    <property type="term" value="P:calcium ion-regulated exocytosis of neurotransmitter"/>
    <property type="evidence" value="ECO:0000266"/>
    <property type="project" value="RGD"/>
</dbReference>
<dbReference type="GO" id="GO:0099502">
    <property type="term" value="P:calcium-dependent activation of synaptic vesicle fusion"/>
    <property type="evidence" value="ECO:0000266"/>
    <property type="project" value="RGD"/>
</dbReference>
<dbReference type="GO" id="GO:0017156">
    <property type="term" value="P:calcium-ion regulated exocytosis"/>
    <property type="evidence" value="ECO:0000304"/>
    <property type="project" value="RGD"/>
</dbReference>
<dbReference type="GO" id="GO:0030154">
    <property type="term" value="P:cell differentiation"/>
    <property type="evidence" value="ECO:0007669"/>
    <property type="project" value="UniProtKB-KW"/>
</dbReference>
<dbReference type="GO" id="GO:0071277">
    <property type="term" value="P:cellular response to calcium ion"/>
    <property type="evidence" value="ECO:0000315"/>
    <property type="project" value="ParkinsonsUK-UCL"/>
</dbReference>
<dbReference type="GO" id="GO:0005513">
    <property type="term" value="P:detection of calcium ion"/>
    <property type="evidence" value="ECO:0000314"/>
    <property type="project" value="RGD"/>
</dbReference>
<dbReference type="GO" id="GO:0098746">
    <property type="term" value="P:fast, calcium ion-dependent exocytosis of neurotransmitter"/>
    <property type="evidence" value="ECO:0000250"/>
    <property type="project" value="ParkinsonsUK-UCL"/>
</dbReference>
<dbReference type="GO" id="GO:0140694">
    <property type="term" value="P:membraneless organelle assembly"/>
    <property type="evidence" value="ECO:0000314"/>
    <property type="project" value="DisProt"/>
</dbReference>
<dbReference type="GO" id="GO:0007269">
    <property type="term" value="P:neurotransmitter secretion"/>
    <property type="evidence" value="ECO:0000266"/>
    <property type="project" value="RGD"/>
</dbReference>
<dbReference type="GO" id="GO:0045956">
    <property type="term" value="P:positive regulation of calcium ion-dependent exocytosis"/>
    <property type="evidence" value="ECO:0000314"/>
    <property type="project" value="RGD"/>
</dbReference>
<dbReference type="GO" id="GO:1903235">
    <property type="term" value="P:positive regulation of calcium ion-dependent exocytosis of neurotransmitter"/>
    <property type="evidence" value="ECO:0000250"/>
    <property type="project" value="UniProtKB"/>
</dbReference>
<dbReference type="GO" id="GO:1903861">
    <property type="term" value="P:positive regulation of dendrite extension"/>
    <property type="evidence" value="ECO:0000266"/>
    <property type="project" value="RGD"/>
</dbReference>
<dbReference type="GO" id="GO:0033603">
    <property type="term" value="P:positive regulation of dopamine secretion"/>
    <property type="evidence" value="ECO:0000315"/>
    <property type="project" value="CACAO"/>
</dbReference>
<dbReference type="GO" id="GO:0050806">
    <property type="term" value="P:positive regulation of synaptic transmission"/>
    <property type="evidence" value="ECO:0000250"/>
    <property type="project" value="ParkinsonsUK-UCL"/>
</dbReference>
<dbReference type="GO" id="GO:0031340">
    <property type="term" value="P:positive regulation of vesicle fusion"/>
    <property type="evidence" value="ECO:0000314"/>
    <property type="project" value="ParkinsonsUK-UCL"/>
</dbReference>
<dbReference type="GO" id="GO:0051291">
    <property type="term" value="P:protein heterooligomerization"/>
    <property type="evidence" value="ECO:0000353"/>
    <property type="project" value="ARUK-UCL"/>
</dbReference>
<dbReference type="GO" id="GO:0017158">
    <property type="term" value="P:regulation of calcium ion-dependent exocytosis"/>
    <property type="evidence" value="ECO:0000315"/>
    <property type="project" value="ParkinsonsUK-UCL"/>
</dbReference>
<dbReference type="GO" id="GO:0014059">
    <property type="term" value="P:regulation of dopamine secretion"/>
    <property type="evidence" value="ECO:0000266"/>
    <property type="project" value="RGD"/>
</dbReference>
<dbReference type="GO" id="GO:1903305">
    <property type="term" value="P:regulation of regulated secretory pathway"/>
    <property type="evidence" value="ECO:0000315"/>
    <property type="project" value="ParkinsonsUK-UCL"/>
</dbReference>
<dbReference type="GO" id="GO:0051966">
    <property type="term" value="P:regulation of synaptic transmission, glutamatergic"/>
    <property type="evidence" value="ECO:0000250"/>
    <property type="project" value="ParkinsonsUK-UCL"/>
</dbReference>
<dbReference type="GO" id="GO:2000300">
    <property type="term" value="P:regulation of synaptic vesicle exocytosis"/>
    <property type="evidence" value="ECO:0000314"/>
    <property type="project" value="UniProtKB"/>
</dbReference>
<dbReference type="GO" id="GO:0031338">
    <property type="term" value="P:regulation of vesicle fusion"/>
    <property type="evidence" value="ECO:0000315"/>
    <property type="project" value="DisProt"/>
</dbReference>
<dbReference type="GO" id="GO:0051592">
    <property type="term" value="P:response to calcium ion"/>
    <property type="evidence" value="ECO:0000314"/>
    <property type="project" value="RGD"/>
</dbReference>
<dbReference type="GO" id="GO:0061669">
    <property type="term" value="P:spontaneous neurotransmitter secretion"/>
    <property type="evidence" value="ECO:0000266"/>
    <property type="project" value="RGD"/>
</dbReference>
<dbReference type="GO" id="GO:0016079">
    <property type="term" value="P:synaptic vesicle exocytosis"/>
    <property type="evidence" value="ECO:0000266"/>
    <property type="project" value="RGD"/>
</dbReference>
<dbReference type="GO" id="GO:0071911">
    <property type="term" value="P:synchronous neurotransmitter secretion"/>
    <property type="evidence" value="ECO:0000266"/>
    <property type="project" value="RGD"/>
</dbReference>
<dbReference type="GO" id="GO:0048278">
    <property type="term" value="P:vesicle docking"/>
    <property type="evidence" value="ECO:0000314"/>
    <property type="project" value="RGD"/>
</dbReference>
<dbReference type="GO" id="GO:0006906">
    <property type="term" value="P:vesicle fusion"/>
    <property type="evidence" value="ECO:0000314"/>
    <property type="project" value="DisProt"/>
</dbReference>
<dbReference type="GO" id="GO:0016050">
    <property type="term" value="P:vesicle organization"/>
    <property type="evidence" value="ECO:0000266"/>
    <property type="project" value="RGD"/>
</dbReference>
<dbReference type="GO" id="GO:0016192">
    <property type="term" value="P:vesicle-mediated transport"/>
    <property type="evidence" value="ECO:0000318"/>
    <property type="project" value="GO_Central"/>
</dbReference>
<dbReference type="CDD" id="cd08385">
    <property type="entry name" value="C2A_Synaptotagmin-1-5-6-9-10"/>
    <property type="match status" value="1"/>
</dbReference>
<dbReference type="CDD" id="cd08402">
    <property type="entry name" value="C2B_Synaptotagmin-1"/>
    <property type="match status" value="1"/>
</dbReference>
<dbReference type="CDD" id="cd21963">
    <property type="entry name" value="Syt1_N"/>
    <property type="match status" value="1"/>
</dbReference>
<dbReference type="FunFam" id="2.60.40.150:FF:000007">
    <property type="entry name" value="Synaptotagmin 1"/>
    <property type="match status" value="1"/>
</dbReference>
<dbReference type="FunFam" id="2.60.40.150:FF:000016">
    <property type="entry name" value="Synaptotagmin 1"/>
    <property type="match status" value="1"/>
</dbReference>
<dbReference type="Gene3D" id="2.60.40.150">
    <property type="entry name" value="C2 domain"/>
    <property type="match status" value="2"/>
</dbReference>
<dbReference type="InterPro" id="IPR000008">
    <property type="entry name" value="C2_dom"/>
</dbReference>
<dbReference type="InterPro" id="IPR035892">
    <property type="entry name" value="C2_domain_sf"/>
</dbReference>
<dbReference type="InterPro" id="IPR001565">
    <property type="entry name" value="Synaptotagmin"/>
</dbReference>
<dbReference type="PANTHER" id="PTHR10024">
    <property type="entry name" value="SYNAPTOTAGMIN"/>
    <property type="match status" value="1"/>
</dbReference>
<dbReference type="PANTHER" id="PTHR10024:SF239">
    <property type="entry name" value="SYNAPTOTAGMIN-1"/>
    <property type="match status" value="1"/>
</dbReference>
<dbReference type="Pfam" id="PF00168">
    <property type="entry name" value="C2"/>
    <property type="match status" value="2"/>
</dbReference>
<dbReference type="PRINTS" id="PR00360">
    <property type="entry name" value="C2DOMAIN"/>
</dbReference>
<dbReference type="PRINTS" id="PR00399">
    <property type="entry name" value="SYNAPTOTAGMN"/>
</dbReference>
<dbReference type="SMART" id="SM00239">
    <property type="entry name" value="C2"/>
    <property type="match status" value="2"/>
</dbReference>
<dbReference type="SUPFAM" id="SSF49562">
    <property type="entry name" value="C2 domain (Calcium/lipid-binding domain, CaLB)"/>
    <property type="match status" value="2"/>
</dbReference>
<dbReference type="PROSITE" id="PS50004">
    <property type="entry name" value="C2"/>
    <property type="match status" value="2"/>
</dbReference>
<evidence type="ECO:0000250" key="1">
    <source>
        <dbReference type="UniProtKB" id="P21579"/>
    </source>
</evidence>
<evidence type="ECO:0000250" key="2">
    <source>
        <dbReference type="UniProtKB" id="P46096"/>
    </source>
</evidence>
<evidence type="ECO:0000250" key="3">
    <source>
        <dbReference type="UniProtKB" id="P48018"/>
    </source>
</evidence>
<evidence type="ECO:0000255" key="4"/>
<evidence type="ECO:0000255" key="5">
    <source>
        <dbReference type="PROSITE-ProRule" id="PRU00041"/>
    </source>
</evidence>
<evidence type="ECO:0000256" key="6">
    <source>
        <dbReference type="SAM" id="MobiDB-lite"/>
    </source>
</evidence>
<evidence type="ECO:0000269" key="7">
    <source>
    </source>
</evidence>
<evidence type="ECO:0000269" key="8">
    <source>
    </source>
</evidence>
<evidence type="ECO:0000269" key="9">
    <source>
    </source>
</evidence>
<evidence type="ECO:0000269" key="10">
    <source>
    </source>
</evidence>
<evidence type="ECO:0000269" key="11">
    <source>
    </source>
</evidence>
<evidence type="ECO:0000269" key="12">
    <source>
    </source>
</evidence>
<evidence type="ECO:0000269" key="13">
    <source>
    </source>
</evidence>
<evidence type="ECO:0000269" key="14">
    <source>
    </source>
</evidence>
<evidence type="ECO:0000269" key="15">
    <source>
    </source>
</evidence>
<evidence type="ECO:0000269" key="16">
    <source>
    </source>
</evidence>
<evidence type="ECO:0000269" key="17">
    <source>
    </source>
</evidence>
<evidence type="ECO:0000269" key="18">
    <source>
    </source>
</evidence>
<evidence type="ECO:0000269" key="19">
    <source>
    </source>
</evidence>
<evidence type="ECO:0000269" key="20">
    <source>
    </source>
</evidence>
<evidence type="ECO:0000269" key="21">
    <source>
    </source>
</evidence>
<evidence type="ECO:0000269" key="22">
    <source>
    </source>
</evidence>
<evidence type="ECO:0000269" key="23">
    <source>
    </source>
</evidence>
<evidence type="ECO:0000269" key="24">
    <source>
    </source>
</evidence>
<evidence type="ECO:0000269" key="25">
    <source>
    </source>
</evidence>
<evidence type="ECO:0000269" key="26">
    <source>
    </source>
</evidence>
<evidence type="ECO:0000269" key="27">
    <source>
    </source>
</evidence>
<evidence type="ECO:0000303" key="28">
    <source>
    </source>
</evidence>
<evidence type="ECO:0000303" key="29">
    <source>
    </source>
</evidence>
<evidence type="ECO:0000303" key="30">
    <source>
    </source>
</evidence>
<evidence type="ECO:0000305" key="31"/>
<evidence type="ECO:0000312" key="32">
    <source>
        <dbReference type="RGD" id="3803"/>
    </source>
</evidence>
<evidence type="ECO:0007744" key="33">
    <source>
    </source>
</evidence>
<evidence type="ECO:0007829" key="34">
    <source>
        <dbReference type="PDB" id="1K5W"/>
    </source>
</evidence>
<evidence type="ECO:0007829" key="35">
    <source>
        <dbReference type="PDB" id="1TJX"/>
    </source>
</evidence>
<evidence type="ECO:0007829" key="36">
    <source>
        <dbReference type="PDB" id="4WEE"/>
    </source>
</evidence>
<evidence type="ECO:0007829" key="37">
    <source>
        <dbReference type="PDB" id="5W5D"/>
    </source>
</evidence>
<evidence type="ECO:0007829" key="38">
    <source>
        <dbReference type="PDB" id="8C5H"/>
    </source>
</evidence>
<accession>P21707</accession>
<accession>Q3S2E6</accession>
<accession>Q707P5</accession>
<reference key="1">
    <citation type="journal article" date="1990" name="Nature">
        <title>Phospholipid binding by a synaptic vesicle protein homologous to the regulatory region of protein kinase C.</title>
        <authorList>
            <person name="Perin M.S."/>
            <person name="Fried V.A."/>
            <person name="Mignery G.A."/>
            <person name="Jahn R."/>
            <person name="Suedhof T.C."/>
        </authorList>
    </citation>
    <scope>NUCLEOTIDE SEQUENCE [MRNA]</scope>
    <scope>FUNCTION</scope>
</reference>
<reference key="2">
    <citation type="journal article" date="2004" name="BMC Genomics">
        <title>Synaptotagmin gene content of the sequenced genomes.</title>
        <authorList>
            <person name="Craxton M.A."/>
        </authorList>
    </citation>
    <scope>NUCLEOTIDE SEQUENCE [MRNA]</scope>
</reference>
<reference key="3">
    <citation type="submission" date="2006-04" db="EMBL/GenBank/DDBJ databases">
        <title>Functional analysis of synaptotagmin.</title>
        <authorList>
            <person name="Sunitha S.S."/>
            <person name="Thekkuveettil A."/>
        </authorList>
    </citation>
    <scope>NUCLEOTIDE SEQUENCE</scope>
    <source>
        <strain>Wistar</strain>
    </source>
</reference>
<reference key="4">
    <citation type="submission" date="2007-04" db="UniProtKB">
        <authorList>
            <person name="Lubec G."/>
            <person name="Chen W.-Q."/>
        </authorList>
    </citation>
    <scope>PROTEIN SEQUENCE OF 214-233; 289-297; 355-366 AND 376-388</scope>
    <scope>IDENTIFICATION BY MASS SPECTROMETRY</scope>
    <source>
        <strain>Sprague-Dawley</strain>
        <tissue>Hippocampus</tissue>
    </source>
</reference>
<reference key="5">
    <citation type="journal article" date="1994" name="J. Biol. Chem.">
        <title>Identification of protein receptor for Clostridium botulinum type B neurotoxin in rat brain synaptosomes.</title>
        <authorList>
            <person name="Nishiki T."/>
            <person name="Kamata Y."/>
            <person name="Nemoto Y."/>
            <person name="Omori A."/>
            <person name="Ito T."/>
            <person name="Takahashi M."/>
            <person name="Kozaki S."/>
        </authorList>
    </citation>
    <scope>PROTEIN SEQUENCE OF 201-213 AND 333-352</scope>
    <scope>FUNCTION AS C.BOTULINUM NEUROTOXIN TYPE B RECEPTOR (MICROBIAL INFECTION)</scope>
    <scope>SUBUNIT (MICROBIAL INFECTION)</scope>
</reference>
<reference key="6">
    <citation type="journal article" date="1991" name="J. Biol. Chem.">
        <title>Domain structure of synaptotagmin (p65).</title>
        <authorList>
            <person name="Perin M.S."/>
            <person name="Brose N."/>
            <person name="Jahn R."/>
            <person name="Suedhof T.C."/>
        </authorList>
    </citation>
    <scope>SUBCELLULAR LOCATION</scope>
</reference>
<reference key="7">
    <citation type="journal article" date="1996" name="J. Biol. Chem.">
        <title>Isoform-specific, calcium-regulated interaction of the synaptic vesicle proteins SV2 and synaptotagmin.</title>
        <authorList>
            <person name="Schivell A.E."/>
            <person name="Batchelor R.H."/>
            <person name="Bajjalieh S.M."/>
        </authorList>
    </citation>
    <scope>INTERACTION WITH SV2A</scope>
    <scope>DOMAIN</scope>
</reference>
<reference key="8">
    <citation type="journal article" date="1999" name="J. Biol. Chem.">
        <title>Calcium-dependent oligomerization of synaptotagmins I and II. Synaptotagmins I and II are localized on the same synaptic vesicle and heterodimerize in the presence of calcium.</title>
        <authorList>
            <person name="Osborne S.L."/>
            <person name="Herreros J."/>
            <person name="Bastiaens P.I."/>
            <person name="Schiavo G."/>
        </authorList>
    </citation>
    <scope>SUBCELLULAR LOCATION</scope>
    <scope>INTERACTION WITH SYT2</scope>
</reference>
<reference key="9">
    <citation type="journal article" date="2001" name="J. Biol. Chem.">
        <title>Direct interaction of the Rab3 effector RIM with Ca2+ channels, SNAP-25, and synaptotagmin.</title>
        <authorList>
            <person name="Coppola T."/>
            <person name="Magnin-Luethi S."/>
            <person name="Perret-Menoud V."/>
            <person name="Gattesco S."/>
            <person name="Schiavo G."/>
            <person name="Regazzi R."/>
        </authorList>
    </citation>
    <scope>INTERACTION WITH RIMS1</scope>
    <source>
        <tissue>Brain</tissue>
    </source>
</reference>
<reference key="10">
    <citation type="journal article" date="2002" name="Biochem. J.">
        <title>Phosphorylation-dependent interaction of the synaptic vesicle proteins cysteine string protein and synaptotagmin I.</title>
        <authorList>
            <person name="Evans G.J."/>
            <person name="Morgan A."/>
        </authorList>
    </citation>
    <scope>INTERACTION WITH DNAJC5</scope>
</reference>
<reference key="11">
    <citation type="journal article" date="2002" name="EMBO J.">
        <title>Synaptotagmins form a hierarchy of exocytotic Ca(2+) sensors with distinct Ca(2+) affinities.</title>
        <authorList>
            <person name="Sugita S."/>
            <person name="Shin O.H."/>
            <person name="Han W."/>
            <person name="Lao Y."/>
            <person name="Suedhof T.C."/>
        </authorList>
    </citation>
    <scope>COFACTOR</scope>
    <scope>SUBCELLULAR LOCATION</scope>
    <scope>DOMAIN</scope>
    <scope>MUTAGENESIS OF ARG-233</scope>
</reference>
<reference key="12">
    <citation type="journal article" date="2003" name="FEBS Lett.">
        <title>Palmitoylation sites and processing of synaptotagmin I, the putative calcium sensor for neurosecretion.</title>
        <authorList>
            <person name="Heindel U."/>
            <person name="Schmidt M.F."/>
            <person name="Veit M."/>
        </authorList>
    </citation>
    <scope>PALMITOYLATION AT CYS-74; CYS-75; CYS-77; CYS-79 AND CYS-82</scope>
</reference>
<reference key="13">
    <citation type="journal article" date="2003" name="J. Cell Biol.">
        <title>Synaptotagmins I and II mediate entry of botulinum neurotoxin B into cells.</title>
        <authorList>
            <person name="Dong M."/>
            <person name="Richards D.A."/>
            <person name="Goodnough M.C."/>
            <person name="Tepp W.H."/>
            <person name="Johnson E.A."/>
            <person name="Chapman E.R."/>
        </authorList>
    </citation>
    <scope>FUNCTION AS C.BOTULINUM NEUROTOXIN TYPE B RECEPTOR (MICROBIAL INFECTION)</scope>
    <scope>SUBUNIT (MICROBIAL INFECTION)</scope>
</reference>
<reference key="14">
    <citation type="journal article" date="2004" name="J. Biol. Chem.">
        <title>Synaptotagmins I and II act as nerve cell receptors for botulinum neurotoxin G.</title>
        <authorList>
            <person name="Rummel A."/>
            <person name="Karnath T."/>
            <person name="Henke T."/>
            <person name="Bigalke H."/>
            <person name="Binz T."/>
        </authorList>
    </citation>
    <scope>FUNCTION AS C.BOTULINUM NEUROTOXIN TYPE G RECEPTOR (MICROBIAL INFECTION)</scope>
    <scope>SUBUNIT (MICROBIAL INFECTION)</scope>
</reference>
<reference key="15">
    <citation type="journal article" date="2005" name="Mol. Cell. Neurosci.">
        <title>SV2A and SV2C contain a unique synaptotagmin-binding site.</title>
        <authorList>
            <person name="Schivell A.E."/>
            <person name="Mochida S."/>
            <person name="Kensel-Hammes P."/>
            <person name="Custer K.L."/>
            <person name="Bajjalieh S.M."/>
        </authorList>
    </citation>
    <scope>INTERACTION WITH SV2A; SV2B AND SV2C</scope>
</reference>
<reference key="16">
    <citation type="journal article" date="2006" name="Nature">
        <title>Botulinum neurotoxin B recognizes its protein receptor with high affinity and specificity.</title>
        <authorList>
            <person name="Jin R."/>
            <person name="Rummel A."/>
            <person name="Binz T."/>
            <person name="Brunger A.T."/>
        </authorList>
    </citation>
    <scope>FUNCTION AS C.BOTULINUM NEUROTOXIN TYPE B RECEPTOR (MICROBIAL INFECTION)</scope>
    <scope>SUBUNIT (MICROBIAL INFECTION)</scope>
    <scope>MUTAGENESIS OF 47-MET--LEU-50; MET-47 AND LEU-50</scope>
</reference>
<reference key="17">
    <citation type="journal article" date="2006" name="Nature">
        <title>Structural basis of cell surface receptor recognition by botulinum neurotoxin B.</title>
        <authorList>
            <person name="Chai Q."/>
            <person name="Arndt J.W."/>
            <person name="Dong M."/>
            <person name="Tepp W.H."/>
            <person name="Johnson E.A."/>
            <person name="Chapman E.R."/>
            <person name="Stevens R.C."/>
        </authorList>
    </citation>
    <scope>FUNCTION AS C.BOTULINUM NEUROTOXIN TYPE B RECEPTOR (MICROBIAL INFECTION)</scope>
    <scope>SUBUNIT (MICROBIAL INFECTION)</scope>
    <scope>MUTAGENESIS OF 50-LEU-ASN-51</scope>
</reference>
<reference key="18">
    <citation type="journal article" date="2007" name="J. Cell Biol.">
        <title>Synaptotagmin-12, a synaptic vesicle phosphoprotein that modulates spontaneous neurotransmitter release.</title>
        <authorList>
            <person name="Maximov A."/>
            <person name="Shin O.H."/>
            <person name="Liu X."/>
            <person name="Suedhof T.C."/>
        </authorList>
    </citation>
    <scope>INTERACTION WITH SYT12</scope>
    <scope>SUBCELLULAR LOCATION</scope>
    <scope>TISSUE SPECIFICITY</scope>
    <scope>GLYCOSYLATION</scope>
</reference>
<reference key="19">
    <citation type="journal article" date="2010" name="J. Mol. Biol.">
        <title>Crystal structure of the botulinum neurotoxin type G binding domain: insight into cell surface binding.</title>
        <authorList>
            <person name="Stenmark P."/>
            <person name="Dong M."/>
            <person name="Dupuy J."/>
            <person name="Chapman E.R."/>
            <person name="Stevens R.C."/>
        </authorList>
    </citation>
    <scope>SUBUNIT (MICROBIAL INFECTION)</scope>
</reference>
<reference key="20">
    <citation type="journal article" date="2012" name="Nat. Commun.">
        <title>Quantitative maps of protein phosphorylation sites across 14 different rat organs and tissues.</title>
        <authorList>
            <person name="Lundby A."/>
            <person name="Secher A."/>
            <person name="Lage K."/>
            <person name="Nordsborg N.B."/>
            <person name="Dmytriyev A."/>
            <person name="Lundby C."/>
            <person name="Olsen J.V."/>
        </authorList>
    </citation>
    <scope>PHOSPHORYLATION [LARGE SCALE ANALYSIS] AT THR-128; SER-342 AND SER-344</scope>
    <scope>IDENTIFICATION BY MASS SPECTROMETRY [LARGE SCALE ANALYSIS]</scope>
</reference>
<reference key="21">
    <citation type="journal article" date="1995" name="Cell">
        <title>Structure of the first C2 domain of synaptotagmin I: a novel Ca2+/phospholipid-binding fold.</title>
        <authorList>
            <person name="Sutton R.B."/>
            <person name="Davletov B.A."/>
            <person name="Berghuis A.M."/>
            <person name="Suedhof T.C."/>
            <person name="Sprang S.R."/>
        </authorList>
    </citation>
    <scope>X-RAY CRYSTALLOGRAPHY (1.9 ANGSTROMS) OF 132-266</scope>
</reference>
<reference key="22">
    <citation type="journal article" date="1998" name="Biochemistry">
        <title>Solution structures of the Ca2+-free and Ca2+-bound C2A domain of synaptotagmin I: does Ca2+ induce a conformational change?</title>
        <authorList>
            <person name="Shao X."/>
            <person name="Fernandez I."/>
            <person name="Suedhof T.C."/>
            <person name="Rizo J."/>
        </authorList>
    </citation>
    <scope>STRUCTURE BY NMR OF 140-267 IN COMPLEX WITH CALCIUM</scope>
</reference>
<reference key="23">
    <citation type="journal article" date="2001" name="Neuron">
        <title>Three-dimensional structure of the synaptotagmin 1 C2B-domain: synaptotagmin 1 as a phospholipid binding machine.</title>
        <authorList>
            <person name="Fernandez I."/>
            <person name="Arac D."/>
            <person name="Ubach J."/>
            <person name="Gerber S.H."/>
            <person name="Shin O."/>
            <person name="Gao Y."/>
            <person name="Anderson R.G."/>
            <person name="Suedhof T.C."/>
            <person name="Rizo J."/>
        </authorList>
    </citation>
    <scope>STRUCTURE BY NMR OF 270-421</scope>
</reference>
<reference key="24">
    <citation type="journal article" date="2015" name="J. Cell Sci.">
        <title>The juxtamembrane region of synaptotagmin 1 interacts with dynamin 1 and regulates vesicle fission during compensatory endocytosis in endocrine cells.</title>
        <authorList>
            <person name="McAdam R.L."/>
            <person name="Varga K.T."/>
            <person name="Jiang Z."/>
            <person name="Young F.B."/>
            <person name="Blandford V."/>
            <person name="McPherson P.S."/>
            <person name="Gong L.W."/>
            <person name="Sossin W.S."/>
        </authorList>
    </citation>
    <scope>INTERACTION WITH DNM1</scope>
</reference>
<reference key="25">
    <citation type="journal article" date="2015" name="J. Clin. Invest.">
        <title>Identification of a human synaptotagmin-1 mutation that perturbs synaptic vesicle cycling.</title>
        <authorList>
            <person name="Baker K."/>
            <person name="Gordon S.L."/>
            <person name="Grozeva D."/>
            <person name="van Kogelenberg M."/>
            <person name="Roberts N.Y."/>
            <person name="Pike M."/>
            <person name="Blair E."/>
            <person name="Hurles M.E."/>
            <person name="Chong W.K."/>
            <person name="Baldeweg T."/>
            <person name="Kurian M.A."/>
            <person name="Boyd S.G."/>
            <person name="Cousin M.A."/>
            <person name="Raymond F.L."/>
        </authorList>
    </citation>
    <scope>MUTAGENESIS OF ILE-367</scope>
</reference>
<reference key="26">
    <citation type="journal article" date="2017" name="Int. J. Biol. Macromol.">
        <title>Localization of Rab3A-binding site on C2A domain of synaptotagmin I to reveal its regulatory mechanism.</title>
        <authorList>
            <person name="Tang X."/>
            <person name="Xie C."/>
            <person name="Wang Y."/>
            <person name="Wang X."/>
        </authorList>
    </citation>
    <scope>INTERACTION WITH RAB3A</scope>
</reference>
<reference key="27">
    <citation type="journal article" date="2018" name="Brain">
        <title>SYT1-associated neurodevelopmental disorder: a case series.</title>
        <authorList>
            <consortium name="Broad Center for Mendelian Genomics"/>
            <person name="Baker K."/>
            <person name="Gordon S.L."/>
            <person name="Melland H."/>
            <person name="Bumbak F."/>
            <person name="Scott D.J."/>
            <person name="Jiang T.J."/>
            <person name="Owen D."/>
            <person name="Turner B.J."/>
            <person name="Boyd S.G."/>
            <person name="Rossi M."/>
            <person name="Al-Raqad M."/>
            <person name="Elpeleg O."/>
            <person name="Peck D."/>
            <person name="Mancini G.M.S."/>
            <person name="Wilke M."/>
            <person name="Zollino M."/>
            <person name="Marangi G."/>
            <person name="Weigand H."/>
            <person name="Borggraefe I."/>
            <person name="Haack T."/>
            <person name="Stark Z."/>
            <person name="Sadedin S."/>
            <person name="Tan T.Y."/>
            <person name="Jiang Y."/>
            <person name="Gibbs R.A."/>
            <person name="Ellingwood S."/>
            <person name="Amaral M."/>
            <person name="Kelley W."/>
            <person name="Kurian M.A."/>
            <person name="Cousin M.A."/>
            <person name="Raymond F.L."/>
        </authorList>
    </citation>
    <scope>FUNCTION</scope>
    <scope>MUTAGENESIS OF MET-302; ASP-303; ASP-365; ILE-367 AND ASN-370</scope>
</reference>
<sequence length="421" mass="47399">MVSASHPEALAAPVTTVATLVPHNATEPASPGEGKEDAFSKLKQKFMNELHKIPLPPWALIAIAIVAVLLVVTCCFCVCKKCLFKKKNKKKGKEKGGKNAINMKDVKDLGKTMKDQALKDDDAETGLTDGEEKEEPKEEEKLGKLQYSLDYDFQNNQLLVGIIQAAELPALDMGGTSDPYVKVFLLPDKKKKFETKVHRKTLNPVFNEQFTFKVPYSELGGKTLVMAVYDFDRFSKHDIIGEFKVPMNTVDFGHVTEEWRDLQSAEKEEQEKLGDICFSLRYVPTAGKLTVVILEAKNLKKMDVGGLSDPYVKIHLMQNGKRLKKKKTTIKKNTLNPYYNESFSFEVPFEQIQKVQVVVTVLDYDKIGKNDAIGKVFVGYNSTGAELRHWSDMLANPRRPIAQWHTLQVEEEVDAMLAVKK</sequence>
<name>SYT1_RAT</name>
<gene>
    <name evidence="32" type="primary">Syt1</name>
</gene>
<organism>
    <name type="scientific">Rattus norvegicus</name>
    <name type="common">Rat</name>
    <dbReference type="NCBI Taxonomy" id="10116"/>
    <lineage>
        <taxon>Eukaryota</taxon>
        <taxon>Metazoa</taxon>
        <taxon>Chordata</taxon>
        <taxon>Craniata</taxon>
        <taxon>Vertebrata</taxon>
        <taxon>Euteleostomi</taxon>
        <taxon>Mammalia</taxon>
        <taxon>Eutheria</taxon>
        <taxon>Euarchontoglires</taxon>
        <taxon>Glires</taxon>
        <taxon>Rodentia</taxon>
        <taxon>Myomorpha</taxon>
        <taxon>Muroidea</taxon>
        <taxon>Muridae</taxon>
        <taxon>Murinae</taxon>
        <taxon>Rattus</taxon>
    </lineage>
</organism>
<keyword id="KW-0002">3D-structure</keyword>
<keyword id="KW-0106">Calcium</keyword>
<keyword id="KW-0963">Cytoplasm</keyword>
<keyword id="KW-0968">Cytoplasmic vesicle</keyword>
<keyword id="KW-0221">Differentiation</keyword>
<keyword id="KW-0903">Direct protein sequencing</keyword>
<keyword id="KW-0325">Glycoprotein</keyword>
<keyword id="KW-0449">Lipoprotein</keyword>
<keyword id="KW-0472">Membrane</keyword>
<keyword id="KW-0479">Metal-binding</keyword>
<keyword id="KW-0564">Palmitate</keyword>
<keyword id="KW-0597">Phosphoprotein</keyword>
<keyword id="KW-1185">Reference proteome</keyword>
<keyword id="KW-0677">Repeat</keyword>
<keyword id="KW-0770">Synapse</keyword>
<keyword id="KW-0812">Transmembrane</keyword>
<keyword id="KW-1133">Transmembrane helix</keyword>
<feature type="chain" id="PRO_0000183940" description="Synaptotagmin-1">
    <location>
        <begin position="1"/>
        <end position="421"/>
    </location>
</feature>
<feature type="topological domain" description="Vesicular" evidence="4">
    <location>
        <begin position="1"/>
        <end position="57"/>
    </location>
</feature>
<feature type="transmembrane region" description="Helical" evidence="4">
    <location>
        <begin position="58"/>
        <end position="79"/>
    </location>
</feature>
<feature type="topological domain" description="Cytoplasmic" evidence="4">
    <location>
        <begin position="80"/>
        <end position="421"/>
    </location>
</feature>
<feature type="domain" description="C2 1" evidence="5">
    <location>
        <begin position="141"/>
        <end position="260"/>
    </location>
</feature>
<feature type="domain" description="C2 2" evidence="5">
    <location>
        <begin position="272"/>
        <end position="405"/>
    </location>
</feature>
<feature type="region of interest" description="Disordered" evidence="6">
    <location>
        <begin position="112"/>
        <end position="141"/>
    </location>
</feature>
<feature type="region of interest" description="Phospholipid binding" evidence="31">
    <location>
        <begin position="135"/>
        <end position="381"/>
    </location>
</feature>
<feature type="compositionally biased region" description="Acidic residues" evidence="6">
    <location>
        <begin position="121"/>
        <end position="133"/>
    </location>
</feature>
<feature type="binding site" evidence="5">
    <location>
        <position position="171"/>
    </location>
    <ligand>
        <name>Ca(2+)</name>
        <dbReference type="ChEBI" id="CHEBI:29108"/>
        <label>2</label>
    </ligand>
</feature>
<feature type="binding site" evidence="5">
    <location>
        <position position="172"/>
    </location>
    <ligand>
        <name>Ca(2+)</name>
        <dbReference type="ChEBI" id="CHEBI:29108"/>
        <label>1</label>
    </ligand>
</feature>
<feature type="binding site" evidence="5">
    <location>
        <position position="172"/>
    </location>
    <ligand>
        <name>Ca(2+)</name>
        <dbReference type="ChEBI" id="CHEBI:29108"/>
        <label>2</label>
    </ligand>
</feature>
<feature type="binding site" evidence="5">
    <location>
        <position position="178"/>
    </location>
    <ligand>
        <name>Ca(2+)</name>
        <dbReference type="ChEBI" id="CHEBI:29108"/>
        <label>1</label>
    </ligand>
</feature>
<feature type="binding site" evidence="5">
    <location>
        <position position="230"/>
    </location>
    <ligand>
        <name>Ca(2+)</name>
        <dbReference type="ChEBI" id="CHEBI:29108"/>
        <label>1</label>
    </ligand>
</feature>
<feature type="binding site" evidence="5">
    <location>
        <position position="230"/>
    </location>
    <ligand>
        <name>Ca(2+)</name>
        <dbReference type="ChEBI" id="CHEBI:29108"/>
        <label>2</label>
    </ligand>
</feature>
<feature type="binding site" evidence="5">
    <location>
        <position position="231"/>
    </location>
    <ligand>
        <name>Ca(2+)</name>
        <dbReference type="ChEBI" id="CHEBI:29108"/>
        <label>1</label>
    </ligand>
</feature>
<feature type="binding site" evidence="5">
    <location>
        <position position="232"/>
    </location>
    <ligand>
        <name>Ca(2+)</name>
        <dbReference type="ChEBI" id="CHEBI:29108"/>
        <label>1</label>
    </ligand>
</feature>
<feature type="binding site" evidence="5">
    <location>
        <position position="232"/>
    </location>
    <ligand>
        <name>Ca(2+)</name>
        <dbReference type="ChEBI" id="CHEBI:29108"/>
        <label>2</label>
    </ligand>
</feature>
<feature type="binding site" evidence="5">
    <location>
        <position position="232"/>
    </location>
    <ligand>
        <name>Ca(2+)</name>
        <dbReference type="ChEBI" id="CHEBI:29108"/>
        <label>3</label>
    </ligand>
</feature>
<feature type="binding site" evidence="5">
    <location>
        <position position="235"/>
    </location>
    <ligand>
        <name>Ca(2+)</name>
        <dbReference type="ChEBI" id="CHEBI:29108"/>
        <label>3</label>
    </ligand>
</feature>
<feature type="binding site" evidence="5">
    <location>
        <position position="236"/>
    </location>
    <ligand>
        <name>Ca(2+)</name>
        <dbReference type="ChEBI" id="CHEBI:29108"/>
        <label>3</label>
    </ligand>
</feature>
<feature type="binding site" evidence="5">
    <location>
        <position position="238"/>
    </location>
    <ligand>
        <name>Ca(2+)</name>
        <dbReference type="ChEBI" id="CHEBI:29108"/>
        <label>2</label>
    </ligand>
</feature>
<feature type="binding site" evidence="5">
    <location>
        <position position="238"/>
    </location>
    <ligand>
        <name>Ca(2+)</name>
        <dbReference type="ChEBI" id="CHEBI:29108"/>
        <label>3</label>
    </ligand>
</feature>
<feature type="binding site" evidence="5">
    <location>
        <position position="303"/>
    </location>
    <ligand>
        <name>Ca(2+)</name>
        <dbReference type="ChEBI" id="CHEBI:29108"/>
        <label>4</label>
    </ligand>
</feature>
<feature type="binding site" evidence="5">
    <location>
        <position position="303"/>
    </location>
    <ligand>
        <name>Ca(2+)</name>
        <dbReference type="ChEBI" id="CHEBI:29108"/>
        <label>5</label>
    </ligand>
</feature>
<feature type="binding site" evidence="5">
    <location>
        <position position="309"/>
    </location>
    <ligand>
        <name>Ca(2+)</name>
        <dbReference type="ChEBI" id="CHEBI:29108"/>
        <label>4</label>
    </ligand>
</feature>
<feature type="binding site" evidence="5">
    <location>
        <position position="363"/>
    </location>
    <ligand>
        <name>Ca(2+)</name>
        <dbReference type="ChEBI" id="CHEBI:29108"/>
        <label>4</label>
    </ligand>
</feature>
<feature type="binding site" evidence="5">
    <location>
        <position position="363"/>
    </location>
    <ligand>
        <name>Ca(2+)</name>
        <dbReference type="ChEBI" id="CHEBI:29108"/>
        <label>5</label>
    </ligand>
</feature>
<feature type="binding site" evidence="5">
    <location>
        <position position="365"/>
    </location>
    <ligand>
        <name>Ca(2+)</name>
        <dbReference type="ChEBI" id="CHEBI:29108"/>
        <label>4</label>
    </ligand>
</feature>
<feature type="binding site" evidence="5">
    <location>
        <position position="365"/>
    </location>
    <ligand>
        <name>Ca(2+)</name>
        <dbReference type="ChEBI" id="CHEBI:29108"/>
        <label>5</label>
    </ligand>
</feature>
<feature type="binding site" evidence="5">
    <location>
        <position position="371"/>
    </location>
    <ligand>
        <name>Ca(2+)</name>
        <dbReference type="ChEBI" id="CHEBI:29108"/>
        <label>5</label>
    </ligand>
</feature>
<feature type="modified residue" description="Phosphothreonine" evidence="33">
    <location>
        <position position="128"/>
    </location>
</feature>
<feature type="modified residue" description="Phosphotyrosine" evidence="2">
    <location>
        <position position="229"/>
    </location>
</feature>
<feature type="modified residue" description="Phosphoserine" evidence="2">
    <location>
        <position position="264"/>
    </location>
</feature>
<feature type="modified residue" description="Phosphoserine" evidence="33">
    <location>
        <position position="342"/>
    </location>
</feature>
<feature type="modified residue" description="Phosphoserine" evidence="33">
    <location>
        <position position="344"/>
    </location>
</feature>
<feature type="lipid moiety-binding region" description="S-palmitoyl cysteine" evidence="10">
    <location>
        <position position="74"/>
    </location>
</feature>
<feature type="lipid moiety-binding region" description="S-palmitoyl cysteine" evidence="10">
    <location>
        <position position="75"/>
    </location>
</feature>
<feature type="lipid moiety-binding region" description="S-palmitoyl cysteine" evidence="10">
    <location>
        <position position="77"/>
    </location>
</feature>
<feature type="lipid moiety-binding region" description="S-palmitoyl cysteine" evidence="10">
    <location>
        <position position="79"/>
    </location>
</feature>
<feature type="lipid moiety-binding region" description="S-palmitoyl cysteine" evidence="10">
    <location>
        <position position="82"/>
    </location>
</feature>
<feature type="glycosylation site" description="N-linked (GlcNAc...) asparagine">
    <location>
        <position position="24"/>
    </location>
</feature>
<feature type="mutagenesis site" description="Greatly increased binding of fragment 1-53 to C.botulinum type B (BoNT/B, botB) heavy chain; increases its resemblance to Syt2." evidence="15">
    <original>MNEL</original>
    <variation>FNEI</variation>
    <location>
        <begin position="47"/>
        <end position="50"/>
    </location>
</feature>
<feature type="mutagenesis site" description="Slightly increased binding of fragment 1-53 to BoNT/B heavy chain." evidence="15">
    <original>M</original>
    <variation>F</variation>
    <location>
        <position position="47"/>
    </location>
</feature>
<feature type="mutagenesis site" description="Binds to BoNT/B in the absence of gangliosides." evidence="14">
    <original>LH</original>
    <variation>IN</variation>
    <location>
        <begin position="50"/>
        <end position="51"/>
    </location>
</feature>
<feature type="mutagenesis site" description="Increased binding of fragment 1-53 to BoNT/B heavy chain." evidence="15">
    <original>L</original>
    <variation>I</variation>
    <location>
        <position position="50"/>
    </location>
</feature>
<feature type="mutagenesis site" description="Impaired Ca(2+)-affinity." evidence="8">
    <original>R</original>
    <variation>Q</variation>
    <location>
        <position position="233"/>
    </location>
</feature>
<feature type="mutagenesis site" description="Fails to localize at nerve terminals." evidence="23">
    <original>M</original>
    <variation>K</variation>
    <location>
        <position position="302"/>
    </location>
</feature>
<feature type="mutagenesis site" description="Fails to relocalize to nerve terminals after stimulation of neurotransmitter release." evidence="23">
    <original>D</original>
    <variation>G</variation>
    <location>
        <position position="303"/>
    </location>
</feature>
<feature type="mutagenesis site" description="Fails to relocalize to nerve terminals after stimulation of neurotransmitter release." evidence="23">
    <original>D</original>
    <variation>E</variation>
    <location>
        <position position="365"/>
    </location>
</feature>
<feature type="mutagenesis site" description="Slows synaptic vesicle fusion kinetics and exocytosis. Impairs the kinetics of synaptic vesicle endocytosis." evidence="20 23">
    <original>I</original>
    <variation>T</variation>
    <location>
        <position position="367"/>
    </location>
</feature>
<feature type="mutagenesis site" description="Slows synaptic vesicle fusion kinetics and exocytosis." evidence="23">
    <original>N</original>
    <variation>K</variation>
    <location>
        <position position="370"/>
    </location>
</feature>
<feature type="sequence conflict" description="In Ref. 1; CAA36981." evidence="31" ref="1">
    <original>D</original>
    <variation>E</variation>
    <location>
        <position position="188"/>
    </location>
</feature>
<feature type="sequence conflict" description="In Ref. 1; CAA36981." evidence="31" ref="1">
    <original>G</original>
    <variation>D</variation>
    <location>
        <position position="374"/>
    </location>
</feature>
<feature type="sequence conflict" description="In Ref. 1; CAA36981." evidence="31" ref="1">
    <original>M</original>
    <variation>I</variation>
    <location>
        <position position="393"/>
    </location>
</feature>
<feature type="strand" evidence="36">
    <location>
        <begin position="144"/>
        <end position="152"/>
    </location>
</feature>
<feature type="turn" evidence="36">
    <location>
        <begin position="153"/>
        <end position="156"/>
    </location>
</feature>
<feature type="strand" evidence="36">
    <location>
        <begin position="157"/>
        <end position="166"/>
    </location>
</feature>
<feature type="helix" evidence="36">
    <location>
        <begin position="172"/>
        <end position="174"/>
    </location>
</feature>
<feature type="strand" evidence="36">
    <location>
        <begin position="179"/>
        <end position="187"/>
    </location>
</feature>
<feature type="strand" evidence="38">
    <location>
        <begin position="192"/>
        <end position="194"/>
    </location>
</feature>
<feature type="strand" evidence="36">
    <location>
        <begin position="205"/>
        <end position="212"/>
    </location>
</feature>
<feature type="helix" evidence="36">
    <location>
        <begin position="216"/>
        <end position="219"/>
    </location>
</feature>
<feature type="strand" evidence="36">
    <location>
        <begin position="223"/>
        <end position="230"/>
    </location>
</feature>
<feature type="strand" evidence="36">
    <location>
        <begin position="233"/>
        <end position="235"/>
    </location>
</feature>
<feature type="strand" evidence="36">
    <location>
        <begin position="238"/>
        <end position="246"/>
    </location>
</feature>
<feature type="helix" evidence="36">
    <location>
        <begin position="247"/>
        <end position="249"/>
    </location>
</feature>
<feature type="strand" evidence="36">
    <location>
        <begin position="256"/>
        <end position="261"/>
    </location>
</feature>
<feature type="strand" evidence="35">
    <location>
        <begin position="275"/>
        <end position="283"/>
    </location>
</feature>
<feature type="turn" evidence="35">
    <location>
        <begin position="284"/>
        <end position="287"/>
    </location>
</feature>
<feature type="strand" evidence="35">
    <location>
        <begin position="288"/>
        <end position="298"/>
    </location>
</feature>
<feature type="strand" evidence="37">
    <location>
        <begin position="302"/>
        <end position="306"/>
    </location>
</feature>
<feature type="strand" evidence="35">
    <location>
        <begin position="310"/>
        <end position="318"/>
    </location>
</feature>
<feature type="strand" evidence="35">
    <location>
        <begin position="321"/>
        <end position="327"/>
    </location>
</feature>
<feature type="strand" evidence="35">
    <location>
        <begin position="338"/>
        <end position="346"/>
    </location>
</feature>
<feature type="helix" evidence="35">
    <location>
        <begin position="349"/>
        <end position="354"/>
    </location>
</feature>
<feature type="strand" evidence="35">
    <location>
        <begin position="356"/>
        <end position="363"/>
    </location>
</feature>
<feature type="strand" evidence="35">
    <location>
        <begin position="366"/>
        <end position="368"/>
    </location>
</feature>
<feature type="strand" evidence="35">
    <location>
        <begin position="371"/>
        <end position="379"/>
    </location>
</feature>
<feature type="helix" evidence="35">
    <location>
        <begin position="384"/>
        <end position="395"/>
    </location>
</feature>
<feature type="strand" evidence="34">
    <location>
        <begin position="396"/>
        <end position="399"/>
    </location>
</feature>
<feature type="strand" evidence="35">
    <location>
        <begin position="401"/>
        <end position="406"/>
    </location>
</feature>
<feature type="helix" evidence="35">
    <location>
        <begin position="410"/>
        <end position="417"/>
    </location>
</feature>
<proteinExistence type="evidence at protein level"/>
<comment type="function">
    <text evidence="1 19 23">Calcium sensor that participates in triggering neurotransmitter release at the synapse (PubMed:2333096, PubMed:30107533). May have a regulatory role in the membrane interactions during trafficking of synaptic vesicles at the active zone of the synapse. It binds acidic phospholipids with a specificity that requires the presence of both an acidic head group and a diacyl backbone. A Ca(2+)-dependent interaction between synaptotagmin and putative receptors for activated protein kinase C has also been reported. It can bind to at least three additional proteins in a Ca(2+)-independent manner; these are neurexins, syntaxin and AP2. Plays a role in dendrite formation by melanocytes.</text>
</comment>
<comment type="function">
    <text evidence="11 14 15 24">(Microbial infection) Receptor for C.botulinum neurotoxin type B (BoNT/B, botB); interaction is improved in the presence of gangliosides (PubMed:14504267, PubMed:17167418, PubMed:8144634). BoNT/B toxin binds to the membrane proximal vesicular domain of Syt1 (residues 32-51) (PubMed:14504267, PubMed:17167421).</text>
</comment>
<comment type="function">
    <text evidence="12 18">(Microbial infection) Receptor for C.botulinum neurotoxin type G (BoNT/G, botG); unlike the case with BoNT/B, interaction is not improved in the presence of gangliosides (PubMed:15123599, PubMed:20219474). BoNT/G toxin binds to the vesicular domain of Syt1 (residues 32-53) (PubMed:15123599, PubMed:20219474).</text>
</comment>
<comment type="cofactor">
    <cofactor evidence="5 8 26">
        <name>Ca(2+)</name>
        <dbReference type="ChEBI" id="CHEBI:29108"/>
    </cofactor>
    <text evidence="26">Binds 3 Ca(2+) ions per subunit. The ions are bound to the C2 domains.</text>
</comment>
<comment type="subunit">
    <text evidence="1 2 3 7 9 13 16 21 22 25 27 31">Homotetramer (Probable). Heterodimer; heterodimerizes with SYT2 in presence of calcium (PubMed:9867811). Interacts with SCAMP5 (By similarity). Interacts with STON2 (By similarity). Forms a complex with SV2B, syntaxin 1 and SNAP25 (By similarity). Interacts with SV2A, SV2B and SV2C (PubMed:15866046, PubMed:8910372). Interacts with RIMS1 (PubMed:11438518). Interacts with PRRT2 (By similarity). Interacts with DNAJC5 in a phosphorylation-dependent manner (PubMed:11931641). Interacts (via N-terminus) with RAB3A (PubMed:28057568). Interacts with SYT12 (PubMed:17190793). Interacts with calmodulin (By similarity). Interacts with DNM1 (via C-terminal proline-rich domain (PRD)); this interaction facilitates vesicle fission during clathrin-mediated endocytosis (CME) (PubMed:25964652).</text>
</comment>
<comment type="subunit">
    <text evidence="11 14 15 18 24">(Microbial infection) Interacts with C.botulinum neurotoxin type B (BoNT/B, botB). Has lower affinity for BoNT/B than Syt2; mutating its residues to match those in Syt2 increases its affinity (PubMed:17167418, PubMed:17167421).</text>
</comment>
<comment type="subunit">
    <text evidence="12 18">(Microbial infection) Interacts with C.botulinum neurotoxin type G (BoNT/G, botG).</text>
</comment>
<comment type="interaction">
    <interactant intactId="EBI-458098">
        <id>P21707</id>
    </interactant>
    <interactant intactId="EBI-539360">
        <id>P18484</id>
        <label>Ap2a2</label>
    </interactant>
    <organismsDiffer>false</organismsDiffer>
    <experiments>5</experiments>
</comment>
<comment type="interaction">
    <interactant intactId="EBI-458098">
        <id>P21707</id>
    </interactant>
    <interactant intactId="EBI-540038">
        <id>Q02294</id>
        <label>Cacna1b</label>
    </interactant>
    <organismsDiffer>false</organismsDiffer>
    <experiments>2</experiments>
</comment>
<comment type="interaction">
    <interactant intactId="EBI-458098">
        <id>P21707</id>
    </interactant>
    <interactant intactId="EBI-2619363">
        <id>Q00954</id>
        <label>Scn1b</label>
    </interactant>
    <organismsDiffer>false</organismsDiffer>
    <experiments>2</experiments>
</comment>
<comment type="interaction">
    <interactant intactId="EBI-458098">
        <id>P21707</id>
    </interactant>
    <interactant intactId="EBI-2619448">
        <id>P04775</id>
        <label>Scn2a</label>
    </interactant>
    <organismsDiffer>false</organismsDiffer>
    <experiments>2</experiments>
</comment>
<comment type="interaction">
    <interactant intactId="EBI-458098">
        <id>P21707</id>
    </interactant>
    <interactant intactId="EBI-1027214">
        <id>P60881</id>
        <label>Snap25</label>
    </interactant>
    <organismsDiffer>false</organismsDiffer>
    <experiments>24</experiments>
</comment>
<comment type="interaction">
    <interactant intactId="EBI-458098">
        <id>P21707</id>
    </interactant>
    <interactant intactId="EBI-466194">
        <id>Q02563</id>
        <label>Sv2a</label>
    </interactant>
    <organismsDiffer>false</organismsDiffer>
    <experiments>2</experiments>
</comment>
<comment type="interaction">
    <interactant intactId="EBI-458098">
        <id>P21707</id>
    </interactant>
    <interactant intactId="EBI-458098">
        <id>P21707</id>
        <label>Syt1</label>
    </interactant>
    <organismsDiffer>false</organismsDiffer>
    <experiments>4</experiments>
</comment>
<comment type="interaction">
    <interactant intactId="EBI-458098">
        <id>P21707</id>
    </interactant>
    <interactant intactId="EBI-540118">
        <id>P50232</id>
        <label>Syt4</label>
    </interactant>
    <organismsDiffer>false</organismsDiffer>
    <experiments>3</experiments>
</comment>
<comment type="interaction">
    <interactant intactId="EBI-458098">
        <id>P21707</id>
    </interactant>
    <interactant intactId="EBI-520880">
        <id>P63045</id>
        <label>Vamp2</label>
    </interactant>
    <organismsDiffer>false</organismsDiffer>
    <experiments>7</experiments>
</comment>
<comment type="interaction">
    <interactant intactId="EBI-458098">
        <id>P21707</id>
    </interactant>
    <interactant intactId="EBI-539742">
        <id>Q8WXE9</id>
        <label>STON2</label>
    </interactant>
    <organismsDiffer>true</organismsDiffer>
    <experiments>2</experiments>
</comment>
<comment type="interaction">
    <interactant intactId="EBI-458098">
        <id>P21707</id>
    </interactant>
    <interactant intactId="EBI-400878">
        <id>O35526</id>
        <label>Stx1a</label>
    </interactant>
    <organismsDiffer>true</organismsDiffer>
    <experiments>3</experiments>
</comment>
<comment type="subcellular location">
    <subcellularLocation>
        <location evidence="8">Cytoplasmic vesicle</location>
        <location evidence="8">Secretory vesicle membrane</location>
        <topology evidence="4">Single-pass membrane protein</topology>
    </subcellularLocation>
    <subcellularLocation>
        <location evidence="16 27">Cytoplasmic vesicle</location>
        <location evidence="16 27">Secretory vesicle</location>
        <location evidence="16 27">Synaptic vesicle membrane</location>
        <topology evidence="4">Single-pass membrane protein</topology>
    </subcellularLocation>
    <subcellularLocation>
        <location evidence="17">Cytoplasmic vesicle</location>
        <location evidence="17">Secretory vesicle</location>
        <location evidence="17">Chromaffin granule membrane</location>
        <topology>Single-pass membrane protein</topology>
    </subcellularLocation>
    <subcellularLocation>
        <location>Cytoplasm</location>
    </subcellularLocation>
</comment>
<comment type="tissue specificity">
    <text evidence="16">Expressed in the brain (at protein level) (PubMed:17190793). Predominantly expressed in rostral, phylogenetically younger brain regions, and in some endocrine tissues.</text>
</comment>
<comment type="domain">
    <text evidence="8 25">The first C2 domain mediates Ca(2+)-dependent phospholipid binding.</text>
</comment>
<comment type="domain">
    <text evidence="25">The second C2 domain mediates interaction with SV2A and probably with STN2.</text>
</comment>
<comment type="PTM">
    <text evidence="16">Glycosylated.</text>
</comment>
<comment type="similarity">
    <text evidence="31">Belongs to the synaptotagmin family.</text>
</comment>
<protein>
    <recommendedName>
        <fullName evidence="30">Synaptotagmin-1</fullName>
    </recommendedName>
    <alternativeName>
        <fullName evidence="28">Synaptotagmin I</fullName>
        <shortName>SytI</shortName>
    </alternativeName>
    <alternativeName>
        <fullName evidence="29">p65</fullName>
    </alternativeName>
</protein>